<proteinExistence type="inferred from homology"/>
<accession>A4W889</accession>
<comment type="function">
    <text evidence="1">Part of the Tol-Pal system, which plays a role in outer membrane invagination during cell division and is important for maintaining outer membrane integrity. TolB occupies a key intermediary position in the Tol-Pal system because it communicates directly with both membrane-embedded components, Pal in the outer membrane and TolA in the inner membrane.</text>
</comment>
<comment type="subunit">
    <text evidence="1">The Tol-Pal system is composed of five core proteins: the inner membrane proteins TolA, TolQ and TolR, the periplasmic protein TolB and the outer membrane protein Pal. They form a network linking the inner and outer membranes and the peptidoglycan layer.</text>
</comment>
<comment type="subcellular location">
    <subcellularLocation>
        <location evidence="1">Periplasm</location>
    </subcellularLocation>
</comment>
<comment type="similarity">
    <text evidence="1">Belongs to the TolB family.</text>
</comment>
<evidence type="ECO:0000255" key="1">
    <source>
        <dbReference type="HAMAP-Rule" id="MF_00671"/>
    </source>
</evidence>
<name>TOLB_ENT38</name>
<protein>
    <recommendedName>
        <fullName evidence="1">Tol-Pal system protein TolB</fullName>
    </recommendedName>
</protein>
<organism>
    <name type="scientific">Enterobacter sp. (strain 638)</name>
    <dbReference type="NCBI Taxonomy" id="399742"/>
    <lineage>
        <taxon>Bacteria</taxon>
        <taxon>Pseudomonadati</taxon>
        <taxon>Pseudomonadota</taxon>
        <taxon>Gammaproteobacteria</taxon>
        <taxon>Enterobacterales</taxon>
        <taxon>Enterobacteriaceae</taxon>
        <taxon>Enterobacter</taxon>
    </lineage>
</organism>
<reference key="1">
    <citation type="journal article" date="2010" name="PLoS Genet.">
        <title>Genome sequence of the plant growth promoting endophytic bacterium Enterobacter sp. 638.</title>
        <authorList>
            <person name="Taghavi S."/>
            <person name="van der Lelie D."/>
            <person name="Hoffman A."/>
            <person name="Zhang Y.B."/>
            <person name="Walla M.D."/>
            <person name="Vangronsveld J."/>
            <person name="Newman L."/>
            <person name="Monchy S."/>
        </authorList>
    </citation>
    <scope>NUCLEOTIDE SEQUENCE [LARGE SCALE GENOMIC DNA]</scope>
    <source>
        <strain>638</strain>
    </source>
</reference>
<sequence length="430" mass="46019">MKQALRVAVSFFMLWAAVLHAEVRIEITQGVDSARPIGVVPFQWAGPGAAPEDIGGIVAADLRNSGKFNPLDRSRLPQQPGTAQEVQPAAWSALGIDAVVVGQVTPSPDGDYNVTYQLVDTGGAPGTVLAQNTYKVNKKWLRYAGHTASDEVFEKLTGIKGAFRTRIAYVVQTNGGQFPYELRVSDYDGYNQFTVHRSPQPLMSPAWTPDGSKLAYVTFESGRSALVIQTLSNGAVRQVASFPRHNGAPAFSPDGSKLAFALSKTGSLNLYVMDVGSGQIRQVTDGRSNNTEPTWFPDSQNLAFTSDQAGRPQVYKVNVNGGTPQRITWEGSQNQDADVSSDGKTMVMVSSAGGQQHIAKQDLVTGGVQVLSSTFLDETPSLAPNGTMVIYSSSQGMGSVLNLVSTDGRFKARLPATDGQVKSPAWSPYL</sequence>
<feature type="signal peptide" evidence="1">
    <location>
        <begin position="1"/>
        <end position="21"/>
    </location>
</feature>
<feature type="chain" id="PRO_5000237761" description="Tol-Pal system protein TolB" evidence="1">
    <location>
        <begin position="22"/>
        <end position="430"/>
    </location>
</feature>
<gene>
    <name evidence="1" type="primary">tolB</name>
    <name type="ordered locus">Ent638_1238</name>
</gene>
<keyword id="KW-0131">Cell cycle</keyword>
<keyword id="KW-0132">Cell division</keyword>
<keyword id="KW-0574">Periplasm</keyword>
<keyword id="KW-0732">Signal</keyword>
<dbReference type="EMBL" id="CP000653">
    <property type="protein sequence ID" value="ABP59919.1"/>
    <property type="molecule type" value="Genomic_DNA"/>
</dbReference>
<dbReference type="RefSeq" id="WP_012016638.1">
    <property type="nucleotide sequence ID" value="NC_009436.1"/>
</dbReference>
<dbReference type="SMR" id="A4W889"/>
<dbReference type="STRING" id="399742.Ent638_1238"/>
<dbReference type="KEGG" id="ent:Ent638_1238"/>
<dbReference type="eggNOG" id="COG0823">
    <property type="taxonomic scope" value="Bacteria"/>
</dbReference>
<dbReference type="HOGENOM" id="CLU_047123_0_0_6"/>
<dbReference type="OrthoDB" id="9802240at2"/>
<dbReference type="Proteomes" id="UP000000230">
    <property type="component" value="Chromosome"/>
</dbReference>
<dbReference type="GO" id="GO:0042597">
    <property type="term" value="C:periplasmic space"/>
    <property type="evidence" value="ECO:0007669"/>
    <property type="project" value="UniProtKB-SubCell"/>
</dbReference>
<dbReference type="GO" id="GO:0051301">
    <property type="term" value="P:cell division"/>
    <property type="evidence" value="ECO:0007669"/>
    <property type="project" value="UniProtKB-UniRule"/>
</dbReference>
<dbReference type="GO" id="GO:0017038">
    <property type="term" value="P:protein import"/>
    <property type="evidence" value="ECO:0007669"/>
    <property type="project" value="InterPro"/>
</dbReference>
<dbReference type="FunFam" id="2.120.10.30:FF:000022">
    <property type="entry name" value="Tol-Pal system protein TolB"/>
    <property type="match status" value="1"/>
</dbReference>
<dbReference type="FunFam" id="3.40.50.10070:FF:000001">
    <property type="entry name" value="Tol-Pal system protein TolB"/>
    <property type="match status" value="1"/>
</dbReference>
<dbReference type="Gene3D" id="2.120.10.30">
    <property type="entry name" value="TolB, C-terminal domain"/>
    <property type="match status" value="1"/>
</dbReference>
<dbReference type="Gene3D" id="3.40.50.10070">
    <property type="entry name" value="TolB, N-terminal domain"/>
    <property type="match status" value="1"/>
</dbReference>
<dbReference type="HAMAP" id="MF_00671">
    <property type="entry name" value="TolB"/>
    <property type="match status" value="1"/>
</dbReference>
<dbReference type="InterPro" id="IPR011042">
    <property type="entry name" value="6-blade_b-propeller_TolB-like"/>
</dbReference>
<dbReference type="InterPro" id="IPR011659">
    <property type="entry name" value="PD40"/>
</dbReference>
<dbReference type="InterPro" id="IPR014167">
    <property type="entry name" value="Tol-Pal_TolB"/>
</dbReference>
<dbReference type="InterPro" id="IPR007195">
    <property type="entry name" value="TolB_N"/>
</dbReference>
<dbReference type="NCBIfam" id="TIGR02800">
    <property type="entry name" value="propeller_TolB"/>
    <property type="match status" value="1"/>
</dbReference>
<dbReference type="PANTHER" id="PTHR36842:SF1">
    <property type="entry name" value="PROTEIN TOLB"/>
    <property type="match status" value="1"/>
</dbReference>
<dbReference type="PANTHER" id="PTHR36842">
    <property type="entry name" value="PROTEIN TOLB HOMOLOG"/>
    <property type="match status" value="1"/>
</dbReference>
<dbReference type="Pfam" id="PF07676">
    <property type="entry name" value="PD40"/>
    <property type="match status" value="4"/>
</dbReference>
<dbReference type="Pfam" id="PF04052">
    <property type="entry name" value="TolB_N"/>
    <property type="match status" value="1"/>
</dbReference>
<dbReference type="SUPFAM" id="SSF52964">
    <property type="entry name" value="TolB, N-terminal domain"/>
    <property type="match status" value="1"/>
</dbReference>
<dbReference type="SUPFAM" id="SSF69304">
    <property type="entry name" value="Tricorn protease N-terminal domain"/>
    <property type="match status" value="1"/>
</dbReference>